<name>ATPL_SHOC1</name>
<gene>
    <name evidence="1" type="primary">atpE</name>
    <name type="ordered locus">ABC3856</name>
</gene>
<feature type="chain" id="PRO_1000184332" description="ATP synthase subunit c">
    <location>
        <begin position="1"/>
        <end position="71"/>
    </location>
</feature>
<feature type="transmembrane region" description="Helical" evidence="1">
    <location>
        <begin position="5"/>
        <end position="25"/>
    </location>
</feature>
<feature type="transmembrane region" description="Helical" evidence="1">
    <location>
        <begin position="47"/>
        <end position="67"/>
    </location>
</feature>
<feature type="site" description="Reversibly protonated during proton transport" evidence="1">
    <location>
        <position position="54"/>
    </location>
</feature>
<dbReference type="EMBL" id="AP006627">
    <property type="protein sequence ID" value="BAD66387.1"/>
    <property type="molecule type" value="Genomic_DNA"/>
</dbReference>
<dbReference type="RefSeq" id="WP_011248690.1">
    <property type="nucleotide sequence ID" value="NC_006582.1"/>
</dbReference>
<dbReference type="SMR" id="Q5WB73"/>
<dbReference type="STRING" id="66692.ABC3856"/>
<dbReference type="GeneID" id="86928181"/>
<dbReference type="KEGG" id="bcl:ABC3856"/>
<dbReference type="eggNOG" id="COG0636">
    <property type="taxonomic scope" value="Bacteria"/>
</dbReference>
<dbReference type="HOGENOM" id="CLU_148047_1_1_9"/>
<dbReference type="Proteomes" id="UP000001168">
    <property type="component" value="Chromosome"/>
</dbReference>
<dbReference type="GO" id="GO:0005886">
    <property type="term" value="C:plasma membrane"/>
    <property type="evidence" value="ECO:0007669"/>
    <property type="project" value="UniProtKB-SubCell"/>
</dbReference>
<dbReference type="GO" id="GO:0045259">
    <property type="term" value="C:proton-transporting ATP synthase complex"/>
    <property type="evidence" value="ECO:0007669"/>
    <property type="project" value="UniProtKB-KW"/>
</dbReference>
<dbReference type="GO" id="GO:0033177">
    <property type="term" value="C:proton-transporting two-sector ATPase complex, proton-transporting domain"/>
    <property type="evidence" value="ECO:0007669"/>
    <property type="project" value="InterPro"/>
</dbReference>
<dbReference type="GO" id="GO:0008289">
    <property type="term" value="F:lipid binding"/>
    <property type="evidence" value="ECO:0007669"/>
    <property type="project" value="UniProtKB-KW"/>
</dbReference>
<dbReference type="GO" id="GO:0046933">
    <property type="term" value="F:proton-transporting ATP synthase activity, rotational mechanism"/>
    <property type="evidence" value="ECO:0007669"/>
    <property type="project" value="UniProtKB-UniRule"/>
</dbReference>
<dbReference type="CDD" id="cd18185">
    <property type="entry name" value="ATP-synt_Fo_c_ATPE"/>
    <property type="match status" value="1"/>
</dbReference>
<dbReference type="FunFam" id="1.20.20.10:FF:000002">
    <property type="entry name" value="ATP synthase subunit c"/>
    <property type="match status" value="1"/>
</dbReference>
<dbReference type="Gene3D" id="1.20.20.10">
    <property type="entry name" value="F1F0 ATP synthase subunit C"/>
    <property type="match status" value="1"/>
</dbReference>
<dbReference type="HAMAP" id="MF_01396">
    <property type="entry name" value="ATP_synth_c_bact"/>
    <property type="match status" value="1"/>
</dbReference>
<dbReference type="InterPro" id="IPR005953">
    <property type="entry name" value="ATP_synth_csu_bac/chlpt"/>
</dbReference>
<dbReference type="InterPro" id="IPR000454">
    <property type="entry name" value="ATP_synth_F0_csu"/>
</dbReference>
<dbReference type="InterPro" id="IPR020537">
    <property type="entry name" value="ATP_synth_F0_csu_DDCD_BS"/>
</dbReference>
<dbReference type="InterPro" id="IPR038662">
    <property type="entry name" value="ATP_synth_F0_csu_sf"/>
</dbReference>
<dbReference type="InterPro" id="IPR002379">
    <property type="entry name" value="ATPase_proteolipid_c-like_dom"/>
</dbReference>
<dbReference type="InterPro" id="IPR035921">
    <property type="entry name" value="F/V-ATP_Csub_sf"/>
</dbReference>
<dbReference type="NCBIfam" id="TIGR01260">
    <property type="entry name" value="ATP_synt_c"/>
    <property type="match status" value="1"/>
</dbReference>
<dbReference type="NCBIfam" id="NF005363">
    <property type="entry name" value="PRK06876.1"/>
    <property type="match status" value="1"/>
</dbReference>
<dbReference type="Pfam" id="PF00137">
    <property type="entry name" value="ATP-synt_C"/>
    <property type="match status" value="1"/>
</dbReference>
<dbReference type="PRINTS" id="PR00124">
    <property type="entry name" value="ATPASEC"/>
</dbReference>
<dbReference type="SUPFAM" id="SSF81333">
    <property type="entry name" value="F1F0 ATP synthase subunit C"/>
    <property type="match status" value="1"/>
</dbReference>
<dbReference type="PROSITE" id="PS00605">
    <property type="entry name" value="ATPASE_C"/>
    <property type="match status" value="1"/>
</dbReference>
<sequence>MTELAIGIAAGLAAIGGAIGVAIIVKAVIEGTARQPEQRGTLQTLMFIGAPLAEAVPIIAIVIAFLLFFMG</sequence>
<keyword id="KW-0066">ATP synthesis</keyword>
<keyword id="KW-1003">Cell membrane</keyword>
<keyword id="KW-0138">CF(0)</keyword>
<keyword id="KW-0375">Hydrogen ion transport</keyword>
<keyword id="KW-0406">Ion transport</keyword>
<keyword id="KW-0446">Lipid-binding</keyword>
<keyword id="KW-0472">Membrane</keyword>
<keyword id="KW-1185">Reference proteome</keyword>
<keyword id="KW-0812">Transmembrane</keyword>
<keyword id="KW-1133">Transmembrane helix</keyword>
<keyword id="KW-0813">Transport</keyword>
<evidence type="ECO:0000255" key="1">
    <source>
        <dbReference type="HAMAP-Rule" id="MF_01396"/>
    </source>
</evidence>
<protein>
    <recommendedName>
        <fullName evidence="1">ATP synthase subunit c</fullName>
    </recommendedName>
    <alternativeName>
        <fullName evidence="1">ATP synthase F(0) sector subunit c</fullName>
    </alternativeName>
    <alternativeName>
        <fullName evidence="1">F-type ATPase subunit c</fullName>
        <shortName evidence="1">F-ATPase subunit c</shortName>
    </alternativeName>
    <alternativeName>
        <fullName evidence="1">Lipid-binding protein</fullName>
    </alternativeName>
</protein>
<reference key="1">
    <citation type="submission" date="2003-10" db="EMBL/GenBank/DDBJ databases">
        <title>The complete genome sequence of the alkaliphilic Bacillus clausii KSM-K16.</title>
        <authorList>
            <person name="Takaki Y."/>
            <person name="Kageyama Y."/>
            <person name="Shimamura S."/>
            <person name="Suzuki H."/>
            <person name="Nishi S."/>
            <person name="Hatada Y."/>
            <person name="Kawai S."/>
            <person name="Ito S."/>
            <person name="Horikoshi K."/>
        </authorList>
    </citation>
    <scope>NUCLEOTIDE SEQUENCE [LARGE SCALE GENOMIC DNA]</scope>
    <source>
        <strain>KSM-K16</strain>
    </source>
</reference>
<accession>Q5WB73</accession>
<organism>
    <name type="scientific">Shouchella clausii (strain KSM-K16)</name>
    <name type="common">Alkalihalobacillus clausii</name>
    <dbReference type="NCBI Taxonomy" id="66692"/>
    <lineage>
        <taxon>Bacteria</taxon>
        <taxon>Bacillati</taxon>
        <taxon>Bacillota</taxon>
        <taxon>Bacilli</taxon>
        <taxon>Bacillales</taxon>
        <taxon>Bacillaceae</taxon>
        <taxon>Shouchella</taxon>
    </lineage>
</organism>
<comment type="function">
    <text evidence="1">F(1)F(0) ATP synthase produces ATP from ADP in the presence of a proton or sodium gradient. F-type ATPases consist of two structural domains, F(1) containing the extramembraneous catalytic core and F(0) containing the membrane proton channel, linked together by a central stalk and a peripheral stalk. During catalysis, ATP synthesis in the catalytic domain of F(1) is coupled via a rotary mechanism of the central stalk subunits to proton translocation.</text>
</comment>
<comment type="function">
    <text evidence="1">Key component of the F(0) channel; it plays a direct role in translocation across the membrane. A homomeric c-ring of between 10-14 subunits forms the central stalk rotor element with the F(1) delta and epsilon subunits.</text>
</comment>
<comment type="subunit">
    <text evidence="1">F-type ATPases have 2 components, F(1) - the catalytic core - and F(0) - the membrane proton channel. F(1) has five subunits: alpha(3), beta(3), gamma(1), delta(1), epsilon(1). F(0) has three main subunits: a(1), b(2) and c(10-14). The alpha and beta chains form an alternating ring which encloses part of the gamma chain. F(1) is attached to F(0) by a central stalk formed by the gamma and epsilon chains, while a peripheral stalk is formed by the delta and b chains.</text>
</comment>
<comment type="subcellular location">
    <subcellularLocation>
        <location evidence="1">Cell membrane</location>
        <topology evidence="1">Multi-pass membrane protein</topology>
    </subcellularLocation>
</comment>
<comment type="similarity">
    <text evidence="1">Belongs to the ATPase C chain family.</text>
</comment>
<proteinExistence type="inferred from homology"/>